<evidence type="ECO:0000250" key="1"/>
<evidence type="ECO:0000250" key="2">
    <source>
        <dbReference type="UniProtKB" id="P32249"/>
    </source>
</evidence>
<evidence type="ECO:0000250" key="3">
    <source>
        <dbReference type="UniProtKB" id="Q3U6B2"/>
    </source>
</evidence>
<evidence type="ECO:0000255" key="4"/>
<evidence type="ECO:0000255" key="5">
    <source>
        <dbReference type="PROSITE-ProRule" id="PRU00521"/>
    </source>
</evidence>
<evidence type="ECO:0000256" key="6">
    <source>
        <dbReference type="SAM" id="MobiDB-lite"/>
    </source>
</evidence>
<protein>
    <recommendedName>
        <fullName>G-protein coupled receptor 183</fullName>
    </recommendedName>
    <alternativeName>
        <fullName>Epstein-Barr virus-induced G-protein coupled receptor 2</fullName>
        <shortName>EBI2</shortName>
        <shortName>EBV-induced G-protein coupled receptor 2</shortName>
    </alternativeName>
</protein>
<keyword id="KW-1064">Adaptive immunity</keyword>
<keyword id="KW-1003">Cell membrane</keyword>
<keyword id="KW-1015">Disulfide bond</keyword>
<keyword id="KW-0297">G-protein coupled receptor</keyword>
<keyword id="KW-0325">Glycoprotein</keyword>
<keyword id="KW-0391">Immunity</keyword>
<keyword id="KW-0472">Membrane</keyword>
<keyword id="KW-0597">Phosphoprotein</keyword>
<keyword id="KW-0675">Receptor</keyword>
<keyword id="KW-1185">Reference proteome</keyword>
<keyword id="KW-0807">Transducer</keyword>
<keyword id="KW-0812">Transmembrane</keyword>
<keyword id="KW-1133">Transmembrane helix</keyword>
<name>GP183_RAT</name>
<sequence>MANNFTTPLAASHGNNCDLYAHHSTARILMPLHYSLVFIIGLVGNLLALVVIVQNRKKINSTTLYSMNLVISDILFTTALPTRIVYYALGFDWRIGDALCRITALLFYINTYAGVNFMTCLSIDRFFAVVHPLRYNKIKRIEYAKGICVFVWILVFAQTLPLLLKPMSKQEADKTTCMEYPNFEGTASLPWILLGACLLGYVLPLAIILLCYSQICCKLFRTAKQNPLTEKSGVNKKALNTIILIIGVFVLCFTPYHVAIMQHMVKTLYAPGALGCGVRHSFQISLHFTVCLMNFNCCMDPFIYFFACKGYKRKVMKMLKRQVSVSISSAVRSAPEENSREMTESQMMIHSKASNGR</sequence>
<comment type="function">
    <text evidence="2 3">G-protein coupled receptor expressed in lymphocytes that acts as a chemotactic receptor for B-cells, T-cells, splenic dendritic cells, monocytes/macrophages and astrocytes (By similarity). Receptor for oxysterol 7-alpha,25-dihydroxycholesterol (7-alpha,25-OHC) and other related oxysterols (By similarity). Mediates cell positioning and movement of a number of cells by binding the 7-alpha,25-OHC ligand that forms a chemotactic gradient (By similarity). Binding of 7-alpha,25-OHC mediates the correct localization of B-cells during humoral immune responses (By similarity). Guides B-cell movement along the B-cell zone-T-cell zone boundary and later to interfollicular and outer follicular regions (By similarity). Its specific expression during B-cell maturation helps position B-cells appropriately for mounting T-dependent antibody responses (By similarity). Collaborates with CXCR5 to mediate B-cell migration; probably by forming a heterodimer with CXCR5 that affects the interaction between of CXCL13 and CXCR5 (By similarity). Also acts as a chemotactic receptor for some T-cells upon binding to 7-alpha,25-OHC ligand (By similarity). Promotes follicular helper T (Tfh) cells differentiation by positioning activated T-cells at the follicle-T-zone interface, promoting contact of newly activated CD4 T-cells with activated dendritic cells and exposing them to Tfh-cell-promoting inducible costimulator (ICOS) ligand (By similarity). Expression in splenic dendritic cells is required for their homeostasis, localization and ability to induce B- and T-cell responses: GPR183 acts as a chemotactic receptor in dendritic cells that mediates the accumulation of CD4(+) dendritic cells in bridging channels (By similarity). Regulates migration of astrocytes and is involved in communication between astrocytes and macrophages (By similarity). Promotes osteoclast precursor migration to bone surfaces (By similarity). Signals constitutively through G(i)-alpha, but not G(s)-alpha or G(q)-alpha (By similarity). Signals constitutively also via MAPK1/3 (ERK1/2) (By similarity).</text>
</comment>
<comment type="subunit">
    <text evidence="2">Homodimer and heterodimer. Heterodimerizes with CXCR5; leading to modulate the interaction between of CXCL13 and CXCR5.</text>
</comment>
<comment type="subcellular location">
    <subcellularLocation>
        <location evidence="2">Cell membrane</location>
        <topology evidence="4">Multi-pass membrane protein</topology>
    </subcellularLocation>
</comment>
<comment type="similarity">
    <text evidence="5">Belongs to the G-protein coupled receptor 1 family.</text>
</comment>
<dbReference type="EMBL" id="AABR03095075">
    <property type="status" value="NOT_ANNOTATED_CDS"/>
    <property type="molecule type" value="Genomic_DNA"/>
</dbReference>
<dbReference type="EMBL" id="CH473951">
    <property type="protein sequence ID" value="EDM02572.1"/>
    <property type="molecule type" value="Genomic_DNA"/>
</dbReference>
<dbReference type="RefSeq" id="NP_001102856.1">
    <property type="nucleotide sequence ID" value="NM_001109386.1"/>
</dbReference>
<dbReference type="RefSeq" id="XP_038949573.1">
    <property type="nucleotide sequence ID" value="XM_039093645.2"/>
</dbReference>
<dbReference type="SMR" id="D4A7K7"/>
<dbReference type="FunCoup" id="D4A7K7">
    <property type="interactions" value="395"/>
</dbReference>
<dbReference type="STRING" id="10116.ENSRNOP00000035137"/>
<dbReference type="BindingDB" id="D4A7K7"/>
<dbReference type="ChEMBL" id="CHEMBL4802001"/>
<dbReference type="GlyCosmos" id="D4A7K7">
    <property type="glycosylation" value="1 site, No reported glycans"/>
</dbReference>
<dbReference type="GlyGen" id="D4A7K7">
    <property type="glycosylation" value="1 site"/>
</dbReference>
<dbReference type="iPTMnet" id="D4A7K7"/>
<dbReference type="PhosphoSitePlus" id="D4A7K7"/>
<dbReference type="PaxDb" id="10116-ENSRNOP00000035137"/>
<dbReference type="Ensembl" id="ENSRNOT00000034560.4">
    <property type="protein sequence ID" value="ENSRNOP00000035137.3"/>
    <property type="gene ID" value="ENSRNOG00000025094.4"/>
</dbReference>
<dbReference type="Ensembl" id="ENSRNOT00000098097.1">
    <property type="protein sequence ID" value="ENSRNOP00000097517.1"/>
    <property type="gene ID" value="ENSRNOG00000025094.4"/>
</dbReference>
<dbReference type="GeneID" id="679975"/>
<dbReference type="KEGG" id="rno:679975"/>
<dbReference type="AGR" id="RGD:1598095"/>
<dbReference type="CTD" id="1880"/>
<dbReference type="RGD" id="1598095">
    <property type="gene designation" value="Gpr183"/>
</dbReference>
<dbReference type="eggNOG" id="ENOG502QWD9">
    <property type="taxonomic scope" value="Eukaryota"/>
</dbReference>
<dbReference type="GeneTree" id="ENSGT01030000234518"/>
<dbReference type="HOGENOM" id="CLU_009579_8_2_1"/>
<dbReference type="InParanoid" id="D4A7K7"/>
<dbReference type="OMA" id="NERTTCM"/>
<dbReference type="OrthoDB" id="10021141at2759"/>
<dbReference type="PhylomeDB" id="D4A7K7"/>
<dbReference type="TreeFam" id="TF350009"/>
<dbReference type="Reactome" id="R-RNO-373076">
    <property type="pathway name" value="Class A/1 (Rhodopsin-like receptors)"/>
</dbReference>
<dbReference type="Reactome" id="R-RNO-418594">
    <property type="pathway name" value="G alpha (i) signalling events"/>
</dbReference>
<dbReference type="PRO" id="PR:D4A7K7"/>
<dbReference type="Proteomes" id="UP000002494">
    <property type="component" value="Chromosome 15"/>
</dbReference>
<dbReference type="Proteomes" id="UP000234681">
    <property type="component" value="Chromosome 15"/>
</dbReference>
<dbReference type="Bgee" id="ENSRNOG00000025094">
    <property type="expression patterns" value="Expressed in spleen and 17 other cell types or tissues"/>
</dbReference>
<dbReference type="GO" id="GO:0005886">
    <property type="term" value="C:plasma membrane"/>
    <property type="evidence" value="ECO:0000250"/>
    <property type="project" value="UniProtKB"/>
</dbReference>
<dbReference type="GO" id="GO:0004930">
    <property type="term" value="F:G protein-coupled receptor activity"/>
    <property type="evidence" value="ECO:0000250"/>
    <property type="project" value="UniProtKB"/>
</dbReference>
<dbReference type="GO" id="GO:0008142">
    <property type="term" value="F:oxysterol binding"/>
    <property type="evidence" value="ECO:0000250"/>
    <property type="project" value="UniProtKB"/>
</dbReference>
<dbReference type="GO" id="GO:0002250">
    <property type="term" value="P:adaptive immune response"/>
    <property type="evidence" value="ECO:0000250"/>
    <property type="project" value="UniProtKB"/>
</dbReference>
<dbReference type="GO" id="GO:0002312">
    <property type="term" value="P:B cell activation involved in immune response"/>
    <property type="evidence" value="ECO:0000318"/>
    <property type="project" value="GO_Central"/>
</dbReference>
<dbReference type="GO" id="GO:0060326">
    <property type="term" value="P:cell chemotaxis"/>
    <property type="evidence" value="ECO:0000266"/>
    <property type="project" value="RGD"/>
</dbReference>
<dbReference type="GO" id="GO:0002407">
    <property type="term" value="P:dendritic cell chemotaxis"/>
    <property type="evidence" value="ECO:0000250"/>
    <property type="project" value="UniProtKB"/>
</dbReference>
<dbReference type="GO" id="GO:0036145">
    <property type="term" value="P:dendritic cell homeostasis"/>
    <property type="evidence" value="ECO:0000250"/>
    <property type="project" value="UniProtKB"/>
</dbReference>
<dbReference type="GO" id="GO:0007186">
    <property type="term" value="P:G protein-coupled receptor signaling pathway"/>
    <property type="evidence" value="ECO:0000250"/>
    <property type="project" value="UniProtKB"/>
</dbReference>
<dbReference type="GO" id="GO:0006959">
    <property type="term" value="P:humoral immune response"/>
    <property type="evidence" value="ECO:0000266"/>
    <property type="project" value="RGD"/>
</dbReference>
<dbReference type="GO" id="GO:0030595">
    <property type="term" value="P:leukocyte chemotaxis"/>
    <property type="evidence" value="ECO:0000250"/>
    <property type="project" value="UniProtKB"/>
</dbReference>
<dbReference type="GO" id="GO:0002313">
    <property type="term" value="P:mature B cell differentiation involved in immune response"/>
    <property type="evidence" value="ECO:0000266"/>
    <property type="project" value="RGD"/>
</dbReference>
<dbReference type="GO" id="GO:0030316">
    <property type="term" value="P:osteoclast differentiation"/>
    <property type="evidence" value="ECO:0000250"/>
    <property type="project" value="UniProtKB"/>
</dbReference>
<dbReference type="GO" id="GO:0030890">
    <property type="term" value="P:positive regulation of B cell proliferation"/>
    <property type="evidence" value="ECO:0000250"/>
    <property type="project" value="UniProtKB"/>
</dbReference>
<dbReference type="GO" id="GO:0070374">
    <property type="term" value="P:positive regulation of ERK1 and ERK2 cascade"/>
    <property type="evidence" value="ECO:0000250"/>
    <property type="project" value="UniProtKB"/>
</dbReference>
<dbReference type="GO" id="GO:2000458">
    <property type="term" value="P:regulation of astrocyte chemotaxis"/>
    <property type="evidence" value="ECO:0000250"/>
    <property type="project" value="UniProtKB"/>
</dbReference>
<dbReference type="GO" id="GO:0010818">
    <property type="term" value="P:T cell chemotaxis"/>
    <property type="evidence" value="ECO:0000250"/>
    <property type="project" value="UniProtKB"/>
</dbReference>
<dbReference type="GO" id="GO:0061470">
    <property type="term" value="P:T follicular helper cell differentiation"/>
    <property type="evidence" value="ECO:0000250"/>
    <property type="project" value="UniProtKB"/>
</dbReference>
<dbReference type="CDD" id="cd15159">
    <property type="entry name" value="7tmA_EBI2"/>
    <property type="match status" value="1"/>
</dbReference>
<dbReference type="FunFam" id="1.20.1070.10:FF:000017">
    <property type="entry name" value="lysophosphatidic acid receptor 4"/>
    <property type="match status" value="1"/>
</dbReference>
<dbReference type="Gene3D" id="1.20.1070.10">
    <property type="entry name" value="Rhodopsin 7-helix transmembrane proteins"/>
    <property type="match status" value="1"/>
</dbReference>
<dbReference type="InterPro" id="IPR047160">
    <property type="entry name" value="GP183-like"/>
</dbReference>
<dbReference type="InterPro" id="IPR000276">
    <property type="entry name" value="GPCR_Rhodpsn"/>
</dbReference>
<dbReference type="InterPro" id="IPR017452">
    <property type="entry name" value="GPCR_Rhodpsn_7TM"/>
</dbReference>
<dbReference type="PANTHER" id="PTHR24237">
    <property type="entry name" value="G-PROTEIN COUPLED RECEPTOR"/>
    <property type="match status" value="1"/>
</dbReference>
<dbReference type="PANTHER" id="PTHR24237:SF7">
    <property type="entry name" value="G-PROTEIN COUPLED RECEPTOR 183"/>
    <property type="match status" value="1"/>
</dbReference>
<dbReference type="Pfam" id="PF00001">
    <property type="entry name" value="7tm_1"/>
    <property type="match status" value="1"/>
</dbReference>
<dbReference type="PRINTS" id="PR00237">
    <property type="entry name" value="GPCRRHODOPSN"/>
</dbReference>
<dbReference type="PRINTS" id="PR01157">
    <property type="entry name" value="P2YPURNOCPTR"/>
</dbReference>
<dbReference type="SMART" id="SM01381">
    <property type="entry name" value="7TM_GPCR_Srsx"/>
    <property type="match status" value="1"/>
</dbReference>
<dbReference type="SUPFAM" id="SSF81321">
    <property type="entry name" value="Family A G protein-coupled receptor-like"/>
    <property type="match status" value="1"/>
</dbReference>
<dbReference type="PROSITE" id="PS00237">
    <property type="entry name" value="G_PROTEIN_RECEP_F1_1"/>
    <property type="match status" value="1"/>
</dbReference>
<dbReference type="PROSITE" id="PS50262">
    <property type="entry name" value="G_PROTEIN_RECEP_F1_2"/>
    <property type="match status" value="1"/>
</dbReference>
<feature type="chain" id="PRO_0000418884" description="G-protein coupled receptor 183">
    <location>
        <begin position="1"/>
        <end position="357"/>
    </location>
</feature>
<feature type="topological domain" description="Extracellular" evidence="4">
    <location>
        <begin position="1"/>
        <end position="32"/>
    </location>
</feature>
<feature type="transmembrane region" description="Helical; Name=1" evidence="4">
    <location>
        <begin position="33"/>
        <end position="53"/>
    </location>
</feature>
<feature type="topological domain" description="Cytoplasmic" evidence="4">
    <location>
        <begin position="54"/>
        <end position="68"/>
    </location>
</feature>
<feature type="transmembrane region" description="Helical; Name=2" evidence="4">
    <location>
        <begin position="69"/>
        <end position="89"/>
    </location>
</feature>
<feature type="topological domain" description="Extracellular" evidence="4">
    <location>
        <begin position="90"/>
        <end position="101"/>
    </location>
</feature>
<feature type="transmembrane region" description="Helical; Name=3" evidence="4">
    <location>
        <begin position="102"/>
        <end position="122"/>
    </location>
</feature>
<feature type="topological domain" description="Cytoplasmic" evidence="4">
    <location>
        <begin position="123"/>
        <end position="143"/>
    </location>
</feature>
<feature type="transmembrane region" description="Helical; Name=4" evidence="4">
    <location>
        <begin position="144"/>
        <end position="164"/>
    </location>
</feature>
<feature type="topological domain" description="Extracellular" evidence="4">
    <location>
        <begin position="165"/>
        <end position="190"/>
    </location>
</feature>
<feature type="transmembrane region" description="Helical; Name=5" evidence="4">
    <location>
        <begin position="191"/>
        <end position="211"/>
    </location>
</feature>
<feature type="topological domain" description="Cytoplasmic" evidence="4">
    <location>
        <begin position="212"/>
        <end position="240"/>
    </location>
</feature>
<feature type="transmembrane region" description="Helical; Name=6" evidence="4">
    <location>
        <begin position="241"/>
        <end position="261"/>
    </location>
</feature>
<feature type="topological domain" description="Extracellular" evidence="4">
    <location>
        <begin position="262"/>
        <end position="287"/>
    </location>
</feature>
<feature type="transmembrane region" description="Helical; Name=7" evidence="4">
    <location>
        <begin position="288"/>
        <end position="308"/>
    </location>
</feature>
<feature type="topological domain" description="Cytoplasmic" evidence="4">
    <location>
        <begin position="309"/>
        <end position="357"/>
    </location>
</feature>
<feature type="region of interest" description="Interaction with G proteins" evidence="1">
    <location>
        <begin position="122"/>
        <end position="130"/>
    </location>
</feature>
<feature type="region of interest" description="Disordered" evidence="6">
    <location>
        <begin position="336"/>
        <end position="357"/>
    </location>
</feature>
<feature type="compositionally biased region" description="Polar residues" evidence="6">
    <location>
        <begin position="344"/>
        <end position="357"/>
    </location>
</feature>
<feature type="binding site" evidence="2">
    <location>
        <position position="83"/>
    </location>
    <ligand>
        <name>7alpha,25-dihydroxycholesterol</name>
        <dbReference type="ChEBI" id="CHEBI:37623"/>
        <note>agonist</note>
    </ligand>
</feature>
<feature type="binding site" evidence="2">
    <location>
        <position position="108"/>
    </location>
    <ligand>
        <name>7alpha,25-dihydroxycholesterol</name>
        <dbReference type="ChEBI" id="CHEBI:37623"/>
        <note>agonist</note>
    </ligand>
</feature>
<feature type="binding site" evidence="2">
    <location>
        <position position="112"/>
    </location>
    <ligand>
        <name>7alpha,25-dihydroxycholesterol</name>
        <dbReference type="ChEBI" id="CHEBI:37623"/>
        <note>agonist</note>
    </ligand>
</feature>
<feature type="binding site" evidence="2">
    <location>
        <position position="256"/>
    </location>
    <ligand>
        <name>7alpha,25-dihydroxycholesterol</name>
        <dbReference type="ChEBI" id="CHEBI:37623"/>
        <note>agonist</note>
    </ligand>
</feature>
<feature type="modified residue" description="Phosphoserine" evidence="3">
    <location>
        <position position="324"/>
    </location>
</feature>
<feature type="modified residue" description="Phosphoserine" evidence="3">
    <location>
        <position position="345"/>
    </location>
</feature>
<feature type="glycosylation site" description="N-linked (GlcNAc...) asparagine" evidence="4">
    <location>
        <position position="4"/>
    </location>
</feature>
<feature type="disulfide bond" evidence="5">
    <location>
        <begin position="100"/>
        <end position="177"/>
    </location>
</feature>
<accession>D4A7K7</accession>
<proteinExistence type="inferred from homology"/>
<organism>
    <name type="scientific">Rattus norvegicus</name>
    <name type="common">Rat</name>
    <dbReference type="NCBI Taxonomy" id="10116"/>
    <lineage>
        <taxon>Eukaryota</taxon>
        <taxon>Metazoa</taxon>
        <taxon>Chordata</taxon>
        <taxon>Craniata</taxon>
        <taxon>Vertebrata</taxon>
        <taxon>Euteleostomi</taxon>
        <taxon>Mammalia</taxon>
        <taxon>Eutheria</taxon>
        <taxon>Euarchontoglires</taxon>
        <taxon>Glires</taxon>
        <taxon>Rodentia</taxon>
        <taxon>Myomorpha</taxon>
        <taxon>Muroidea</taxon>
        <taxon>Muridae</taxon>
        <taxon>Murinae</taxon>
        <taxon>Rattus</taxon>
    </lineage>
</organism>
<gene>
    <name type="primary">Gpr183</name>
    <name type="synonym">Ebi2</name>
</gene>
<reference key="1">
    <citation type="journal article" date="2004" name="Nature">
        <title>Genome sequence of the Brown Norway rat yields insights into mammalian evolution.</title>
        <authorList>
            <person name="Gibbs R.A."/>
            <person name="Weinstock G.M."/>
            <person name="Metzker M.L."/>
            <person name="Muzny D.M."/>
            <person name="Sodergren E.J."/>
            <person name="Scherer S."/>
            <person name="Scott G."/>
            <person name="Steffen D."/>
            <person name="Worley K.C."/>
            <person name="Burch P.E."/>
            <person name="Okwuonu G."/>
            <person name="Hines S."/>
            <person name="Lewis L."/>
            <person name="Deramo C."/>
            <person name="Delgado O."/>
            <person name="Dugan-Rocha S."/>
            <person name="Miner G."/>
            <person name="Morgan M."/>
            <person name="Hawes A."/>
            <person name="Gill R."/>
            <person name="Holt R.A."/>
            <person name="Adams M.D."/>
            <person name="Amanatides P.G."/>
            <person name="Baden-Tillson H."/>
            <person name="Barnstead M."/>
            <person name="Chin S."/>
            <person name="Evans C.A."/>
            <person name="Ferriera S."/>
            <person name="Fosler C."/>
            <person name="Glodek A."/>
            <person name="Gu Z."/>
            <person name="Jennings D."/>
            <person name="Kraft C.L."/>
            <person name="Nguyen T."/>
            <person name="Pfannkoch C.M."/>
            <person name="Sitter C."/>
            <person name="Sutton G.G."/>
            <person name="Venter J.C."/>
            <person name="Woodage T."/>
            <person name="Smith D."/>
            <person name="Lee H.-M."/>
            <person name="Gustafson E."/>
            <person name="Cahill P."/>
            <person name="Kana A."/>
            <person name="Doucette-Stamm L."/>
            <person name="Weinstock K."/>
            <person name="Fechtel K."/>
            <person name="Weiss R.B."/>
            <person name="Dunn D.M."/>
            <person name="Green E.D."/>
            <person name="Blakesley R.W."/>
            <person name="Bouffard G.G."/>
            <person name="De Jong P.J."/>
            <person name="Osoegawa K."/>
            <person name="Zhu B."/>
            <person name="Marra M."/>
            <person name="Schein J."/>
            <person name="Bosdet I."/>
            <person name="Fjell C."/>
            <person name="Jones S."/>
            <person name="Krzywinski M."/>
            <person name="Mathewson C."/>
            <person name="Siddiqui A."/>
            <person name="Wye N."/>
            <person name="McPherson J."/>
            <person name="Zhao S."/>
            <person name="Fraser C.M."/>
            <person name="Shetty J."/>
            <person name="Shatsman S."/>
            <person name="Geer K."/>
            <person name="Chen Y."/>
            <person name="Abramzon S."/>
            <person name="Nierman W.C."/>
            <person name="Havlak P.H."/>
            <person name="Chen R."/>
            <person name="Durbin K.J."/>
            <person name="Egan A."/>
            <person name="Ren Y."/>
            <person name="Song X.-Z."/>
            <person name="Li B."/>
            <person name="Liu Y."/>
            <person name="Qin X."/>
            <person name="Cawley S."/>
            <person name="Cooney A.J."/>
            <person name="D'Souza L.M."/>
            <person name="Martin K."/>
            <person name="Wu J.Q."/>
            <person name="Gonzalez-Garay M.L."/>
            <person name="Jackson A.R."/>
            <person name="Kalafus K.J."/>
            <person name="McLeod M.P."/>
            <person name="Milosavljevic A."/>
            <person name="Virk D."/>
            <person name="Volkov A."/>
            <person name="Wheeler D.A."/>
            <person name="Zhang Z."/>
            <person name="Bailey J.A."/>
            <person name="Eichler E.E."/>
            <person name="Tuzun E."/>
            <person name="Birney E."/>
            <person name="Mongin E."/>
            <person name="Ureta-Vidal A."/>
            <person name="Woodwark C."/>
            <person name="Zdobnov E."/>
            <person name="Bork P."/>
            <person name="Suyama M."/>
            <person name="Torrents D."/>
            <person name="Alexandersson M."/>
            <person name="Trask B.J."/>
            <person name="Young J.M."/>
            <person name="Huang H."/>
            <person name="Wang H."/>
            <person name="Xing H."/>
            <person name="Daniels S."/>
            <person name="Gietzen D."/>
            <person name="Schmidt J."/>
            <person name="Stevens K."/>
            <person name="Vitt U."/>
            <person name="Wingrove J."/>
            <person name="Camara F."/>
            <person name="Mar Alba M."/>
            <person name="Abril J.F."/>
            <person name="Guigo R."/>
            <person name="Smit A."/>
            <person name="Dubchak I."/>
            <person name="Rubin E.M."/>
            <person name="Couronne O."/>
            <person name="Poliakov A."/>
            <person name="Huebner N."/>
            <person name="Ganten D."/>
            <person name="Goesele C."/>
            <person name="Hummel O."/>
            <person name="Kreitler T."/>
            <person name="Lee Y.-A."/>
            <person name="Monti J."/>
            <person name="Schulz H."/>
            <person name="Zimdahl H."/>
            <person name="Himmelbauer H."/>
            <person name="Lehrach H."/>
            <person name="Jacob H.J."/>
            <person name="Bromberg S."/>
            <person name="Gullings-Handley J."/>
            <person name="Jensen-Seaman M.I."/>
            <person name="Kwitek A.E."/>
            <person name="Lazar J."/>
            <person name="Pasko D."/>
            <person name="Tonellato P.J."/>
            <person name="Twigger S."/>
            <person name="Ponting C.P."/>
            <person name="Duarte J.M."/>
            <person name="Rice S."/>
            <person name="Goodstadt L."/>
            <person name="Beatson S.A."/>
            <person name="Emes R.D."/>
            <person name="Winter E.E."/>
            <person name="Webber C."/>
            <person name="Brandt P."/>
            <person name="Nyakatura G."/>
            <person name="Adetobi M."/>
            <person name="Chiaromonte F."/>
            <person name="Elnitski L."/>
            <person name="Eswara P."/>
            <person name="Hardison R.C."/>
            <person name="Hou M."/>
            <person name="Kolbe D."/>
            <person name="Makova K."/>
            <person name="Miller W."/>
            <person name="Nekrutenko A."/>
            <person name="Riemer C."/>
            <person name="Schwartz S."/>
            <person name="Taylor J."/>
            <person name="Yang S."/>
            <person name="Zhang Y."/>
            <person name="Lindpaintner K."/>
            <person name="Andrews T.D."/>
            <person name="Caccamo M."/>
            <person name="Clamp M."/>
            <person name="Clarke L."/>
            <person name="Curwen V."/>
            <person name="Durbin R.M."/>
            <person name="Eyras E."/>
            <person name="Searle S.M."/>
            <person name="Cooper G.M."/>
            <person name="Batzoglou S."/>
            <person name="Brudno M."/>
            <person name="Sidow A."/>
            <person name="Stone E.A."/>
            <person name="Payseur B.A."/>
            <person name="Bourque G."/>
            <person name="Lopez-Otin C."/>
            <person name="Puente X.S."/>
            <person name="Chakrabarti K."/>
            <person name="Chatterji S."/>
            <person name="Dewey C."/>
            <person name="Pachter L."/>
            <person name="Bray N."/>
            <person name="Yap V.B."/>
            <person name="Caspi A."/>
            <person name="Tesler G."/>
            <person name="Pevzner P.A."/>
            <person name="Haussler D."/>
            <person name="Roskin K.M."/>
            <person name="Baertsch R."/>
            <person name="Clawson H."/>
            <person name="Furey T.S."/>
            <person name="Hinrichs A.S."/>
            <person name="Karolchik D."/>
            <person name="Kent W.J."/>
            <person name="Rosenbloom K.R."/>
            <person name="Trumbower H."/>
            <person name="Weirauch M."/>
            <person name="Cooper D.N."/>
            <person name="Stenson P.D."/>
            <person name="Ma B."/>
            <person name="Brent M."/>
            <person name="Arumugam M."/>
            <person name="Shteynberg D."/>
            <person name="Copley R.R."/>
            <person name="Taylor M.S."/>
            <person name="Riethman H."/>
            <person name="Mudunuri U."/>
            <person name="Peterson J."/>
            <person name="Guyer M."/>
            <person name="Felsenfeld A."/>
            <person name="Old S."/>
            <person name="Mockrin S."/>
            <person name="Collins F.S."/>
        </authorList>
    </citation>
    <scope>NUCLEOTIDE SEQUENCE [LARGE SCALE GENOMIC DNA]</scope>
    <source>
        <strain>Brown Norway</strain>
    </source>
</reference>
<reference key="2">
    <citation type="submission" date="2005-07" db="EMBL/GenBank/DDBJ databases">
        <authorList>
            <person name="Mural R.J."/>
            <person name="Adams M.D."/>
            <person name="Myers E.W."/>
            <person name="Smith H.O."/>
            <person name="Venter J.C."/>
        </authorList>
    </citation>
    <scope>NUCLEOTIDE SEQUENCE [LARGE SCALE GENOMIC DNA]</scope>
    <source>
        <strain>Brown Norway</strain>
    </source>
</reference>